<keyword id="KW-0067">ATP-binding</keyword>
<keyword id="KW-0378">Hydrolase</keyword>
<keyword id="KW-0547">Nucleotide-binding</keyword>
<keyword id="KW-0539">Nucleus</keyword>
<keyword id="KW-1185">Reference proteome</keyword>
<keyword id="KW-0690">Ribosome biogenesis</keyword>
<keyword id="KW-0694">RNA-binding</keyword>
<keyword id="KW-0698">rRNA processing</keyword>
<sequence length="781" mass="86883">MDIFKVLSRGIKAQPKKNQPGAPQLLPSAGAKVNPQFFHDNVGGANAKRGKKRKRKGAQANNATESGDEDDDASDVDYFAPKPTPEELAAKKDAELKADEPKKQKPKLLEENECRQILKSHRLKFTVLAGRVPQDEAATEEKPPKKQKKQKEDRKKQEEEEKKKKKKDEDKKQIYPQPLNSFGELKYTYGIHPVLADNITRQGFRVPTEVQMGSLPLQLRPEMALEKATDVEDVKVEKGIDFLGVAPTGSGKTISFLIPAIDAIIKRRAEDYTPETDEHVLQAIVVAPTRELASQIVNEGRKLAIGTGVRVVLMKRTLRLVAESNEQEETEQEAKEEVQDSDSDSEAESEPEEVMKIDEEEEEEEESDSDAEKKTESRAKGDQKFKKERPITRVDILVTTPKILLNFLCGGEKEKGKPRIIKKTLPTVQSLILDEADVLLDPIFRKQTMGIWRACTHPNLGMTCWSATMASNIEALLTKHIDKRAKRTPEQTPKPLIRLVVGLKDTAVPNITHKLIYTATEPGKLLALRQLLHPVSSADSGPPLRPPFLVFTQTIERAQALHDELKYDIPLEAGGSARVAVLHSSLPDSVRSKIMARFRSGEVWVLITTDVLARGVDFAGVNGVVNYDVPVSAAAYVHRAGRTGRAGREGGVAVTFYTKDDIPFVKSVANVIAMSEKQAGKDIDEKDTVKAAQGSVQKWLLDALPKVAKEDKRKLKVRGVESRRTGGKATITTKSSWERRRENNRREAIEASKRRKREAQKAQKEGGAAPEKAEEEWTGLD</sequence>
<dbReference type="EC" id="3.6.4.13"/>
<dbReference type="EMBL" id="BX842638">
    <property type="protein sequence ID" value="CAE76585.1"/>
    <property type="molecule type" value="Genomic_DNA"/>
</dbReference>
<dbReference type="EMBL" id="CM002236">
    <property type="protein sequence ID" value="EAA35509.1"/>
    <property type="molecule type" value="Genomic_DNA"/>
</dbReference>
<dbReference type="RefSeq" id="XP_964745.1">
    <property type="nucleotide sequence ID" value="XM_959652.2"/>
</dbReference>
<dbReference type="SMR" id="Q7SFC8"/>
<dbReference type="FunCoup" id="Q7SFC8">
    <property type="interactions" value="985"/>
</dbReference>
<dbReference type="STRING" id="367110.Q7SFC8"/>
<dbReference type="PaxDb" id="5141-EFNCRP00000000631"/>
<dbReference type="EnsemblFungi" id="EAA35509">
    <property type="protein sequence ID" value="EAA35509"/>
    <property type="gene ID" value="NCU00919"/>
</dbReference>
<dbReference type="GeneID" id="3880898"/>
<dbReference type="KEGG" id="ncr:NCU00919"/>
<dbReference type="VEuPathDB" id="FungiDB:NCU00919"/>
<dbReference type="HOGENOM" id="CLU_003041_1_4_1"/>
<dbReference type="InParanoid" id="Q7SFC8"/>
<dbReference type="OrthoDB" id="360161at2759"/>
<dbReference type="Proteomes" id="UP000001805">
    <property type="component" value="Chromosome 1, Linkage Group I"/>
</dbReference>
<dbReference type="GO" id="GO:0005730">
    <property type="term" value="C:nucleolus"/>
    <property type="evidence" value="ECO:0007669"/>
    <property type="project" value="UniProtKB-SubCell"/>
</dbReference>
<dbReference type="GO" id="GO:0005524">
    <property type="term" value="F:ATP binding"/>
    <property type="evidence" value="ECO:0007669"/>
    <property type="project" value="UniProtKB-KW"/>
</dbReference>
<dbReference type="GO" id="GO:0016887">
    <property type="term" value="F:ATP hydrolysis activity"/>
    <property type="evidence" value="ECO:0007669"/>
    <property type="project" value="RHEA"/>
</dbReference>
<dbReference type="GO" id="GO:0003723">
    <property type="term" value="F:RNA binding"/>
    <property type="evidence" value="ECO:0007669"/>
    <property type="project" value="UniProtKB-KW"/>
</dbReference>
<dbReference type="GO" id="GO:0003724">
    <property type="term" value="F:RNA helicase activity"/>
    <property type="evidence" value="ECO:0007669"/>
    <property type="project" value="UniProtKB-EC"/>
</dbReference>
<dbReference type="GO" id="GO:0030490">
    <property type="term" value="P:maturation of SSU-rRNA"/>
    <property type="evidence" value="ECO:0000318"/>
    <property type="project" value="GO_Central"/>
</dbReference>
<dbReference type="CDD" id="cd17957">
    <property type="entry name" value="DEADc_DDX52"/>
    <property type="match status" value="1"/>
</dbReference>
<dbReference type="CDD" id="cd18787">
    <property type="entry name" value="SF2_C_DEAD"/>
    <property type="match status" value="1"/>
</dbReference>
<dbReference type="Gene3D" id="3.40.50.300">
    <property type="entry name" value="P-loop containing nucleotide triphosphate hydrolases"/>
    <property type="match status" value="2"/>
</dbReference>
<dbReference type="InterPro" id="IPR044764">
    <property type="entry name" value="DDX52/Rok1_DEADc"/>
</dbReference>
<dbReference type="InterPro" id="IPR011545">
    <property type="entry name" value="DEAD/DEAH_box_helicase_dom"/>
</dbReference>
<dbReference type="InterPro" id="IPR014013">
    <property type="entry name" value="Helic_SF1/SF2_ATP-bd_DinG/Rad3"/>
</dbReference>
<dbReference type="InterPro" id="IPR014001">
    <property type="entry name" value="Helicase_ATP-bd"/>
</dbReference>
<dbReference type="InterPro" id="IPR001650">
    <property type="entry name" value="Helicase_C-like"/>
</dbReference>
<dbReference type="InterPro" id="IPR027417">
    <property type="entry name" value="P-loop_NTPase"/>
</dbReference>
<dbReference type="PANTHER" id="PTHR24031">
    <property type="entry name" value="RNA HELICASE"/>
    <property type="match status" value="1"/>
</dbReference>
<dbReference type="Pfam" id="PF00270">
    <property type="entry name" value="DEAD"/>
    <property type="match status" value="2"/>
</dbReference>
<dbReference type="Pfam" id="PF00271">
    <property type="entry name" value="Helicase_C"/>
    <property type="match status" value="1"/>
</dbReference>
<dbReference type="SMART" id="SM00487">
    <property type="entry name" value="DEXDc"/>
    <property type="match status" value="1"/>
</dbReference>
<dbReference type="SMART" id="SM00490">
    <property type="entry name" value="HELICc"/>
    <property type="match status" value="1"/>
</dbReference>
<dbReference type="SUPFAM" id="SSF52540">
    <property type="entry name" value="P-loop containing nucleoside triphosphate hydrolases"/>
    <property type="match status" value="1"/>
</dbReference>
<dbReference type="PROSITE" id="PS51192">
    <property type="entry name" value="HELICASE_ATP_BIND_1"/>
    <property type="match status" value="1"/>
</dbReference>
<dbReference type="PROSITE" id="PS51194">
    <property type="entry name" value="HELICASE_CTER"/>
    <property type="match status" value="1"/>
</dbReference>
<dbReference type="PROSITE" id="PS51195">
    <property type="entry name" value="Q_MOTIF"/>
    <property type="match status" value="1"/>
</dbReference>
<accession>Q7SFC8</accession>
<proteinExistence type="inferred from homology"/>
<name>ROK1_NEUCR</name>
<reference key="1">
    <citation type="journal article" date="2003" name="Nucleic Acids Res.">
        <title>What's in the genome of a filamentous fungus? Analysis of the Neurospora genome sequence.</title>
        <authorList>
            <person name="Mannhaupt G."/>
            <person name="Montrone C."/>
            <person name="Haase D."/>
            <person name="Mewes H.-W."/>
            <person name="Aign V."/>
            <person name="Hoheisel J.D."/>
            <person name="Fartmann B."/>
            <person name="Nyakatura G."/>
            <person name="Kempken F."/>
            <person name="Maier J."/>
            <person name="Schulte U."/>
        </authorList>
    </citation>
    <scope>NUCLEOTIDE SEQUENCE [LARGE SCALE GENOMIC DNA]</scope>
    <source>
        <strain>ATCC 24698 / 74-OR23-1A / CBS 708.71 / DSM 1257 / FGSC 987</strain>
    </source>
</reference>
<reference key="2">
    <citation type="journal article" date="2003" name="Nature">
        <title>The genome sequence of the filamentous fungus Neurospora crassa.</title>
        <authorList>
            <person name="Galagan J.E."/>
            <person name="Calvo S.E."/>
            <person name="Borkovich K.A."/>
            <person name="Selker E.U."/>
            <person name="Read N.D."/>
            <person name="Jaffe D.B."/>
            <person name="FitzHugh W."/>
            <person name="Ma L.-J."/>
            <person name="Smirnov S."/>
            <person name="Purcell S."/>
            <person name="Rehman B."/>
            <person name="Elkins T."/>
            <person name="Engels R."/>
            <person name="Wang S."/>
            <person name="Nielsen C.B."/>
            <person name="Butler J."/>
            <person name="Endrizzi M."/>
            <person name="Qui D."/>
            <person name="Ianakiev P."/>
            <person name="Bell-Pedersen D."/>
            <person name="Nelson M.A."/>
            <person name="Werner-Washburne M."/>
            <person name="Selitrennikoff C.P."/>
            <person name="Kinsey J.A."/>
            <person name="Braun E.L."/>
            <person name="Zelter A."/>
            <person name="Schulte U."/>
            <person name="Kothe G.O."/>
            <person name="Jedd G."/>
            <person name="Mewes H.-W."/>
            <person name="Staben C."/>
            <person name="Marcotte E."/>
            <person name="Greenberg D."/>
            <person name="Roy A."/>
            <person name="Foley K."/>
            <person name="Naylor J."/>
            <person name="Stange-Thomann N."/>
            <person name="Barrett R."/>
            <person name="Gnerre S."/>
            <person name="Kamal M."/>
            <person name="Kamvysselis M."/>
            <person name="Mauceli E.W."/>
            <person name="Bielke C."/>
            <person name="Rudd S."/>
            <person name="Frishman D."/>
            <person name="Krystofova S."/>
            <person name="Rasmussen C."/>
            <person name="Metzenberg R.L."/>
            <person name="Perkins D.D."/>
            <person name="Kroken S."/>
            <person name="Cogoni C."/>
            <person name="Macino G."/>
            <person name="Catcheside D.E.A."/>
            <person name="Li W."/>
            <person name="Pratt R.J."/>
            <person name="Osmani S.A."/>
            <person name="DeSouza C.P.C."/>
            <person name="Glass N.L."/>
            <person name="Orbach M.J."/>
            <person name="Berglund J.A."/>
            <person name="Voelker R."/>
            <person name="Yarden O."/>
            <person name="Plamann M."/>
            <person name="Seiler S."/>
            <person name="Dunlap J.C."/>
            <person name="Radford A."/>
            <person name="Aramayo R."/>
            <person name="Natvig D.O."/>
            <person name="Alex L.A."/>
            <person name="Mannhaupt G."/>
            <person name="Ebbole D.J."/>
            <person name="Freitag M."/>
            <person name="Paulsen I."/>
            <person name="Sachs M.S."/>
            <person name="Lander E.S."/>
            <person name="Nusbaum C."/>
            <person name="Birren B.W."/>
        </authorList>
    </citation>
    <scope>NUCLEOTIDE SEQUENCE [LARGE SCALE GENOMIC DNA]</scope>
    <source>
        <strain>ATCC 24698 / 74-OR23-1A / CBS 708.71 / DSM 1257 / FGSC 987</strain>
    </source>
</reference>
<feature type="chain" id="PRO_0000232307" description="ATP-dependent RNA helicase rok1">
    <location>
        <begin position="1"/>
        <end position="781"/>
    </location>
</feature>
<feature type="domain" description="Helicase ATP-binding" evidence="2">
    <location>
        <begin position="233"/>
        <end position="487"/>
    </location>
</feature>
<feature type="domain" description="Helicase C-terminal" evidence="3">
    <location>
        <begin position="527"/>
        <end position="689"/>
    </location>
</feature>
<feature type="region of interest" description="Disordered" evidence="4">
    <location>
        <begin position="7"/>
        <end position="108"/>
    </location>
</feature>
<feature type="region of interest" description="Disordered" evidence="4">
    <location>
        <begin position="134"/>
        <end position="177"/>
    </location>
</feature>
<feature type="region of interest" description="Disordered" evidence="4">
    <location>
        <begin position="323"/>
        <end position="386"/>
    </location>
</feature>
<feature type="region of interest" description="Disordered" evidence="4">
    <location>
        <begin position="718"/>
        <end position="781"/>
    </location>
</feature>
<feature type="short sequence motif" description="Q motif">
    <location>
        <begin position="184"/>
        <end position="212"/>
    </location>
</feature>
<feature type="short sequence motif" description="DEAD box">
    <location>
        <begin position="434"/>
        <end position="437"/>
    </location>
</feature>
<feature type="compositionally biased region" description="Basic residues" evidence="4">
    <location>
        <begin position="48"/>
        <end position="57"/>
    </location>
</feature>
<feature type="compositionally biased region" description="Acidic residues" evidence="4">
    <location>
        <begin position="66"/>
        <end position="75"/>
    </location>
</feature>
<feature type="compositionally biased region" description="Basic and acidic residues" evidence="4">
    <location>
        <begin position="84"/>
        <end position="108"/>
    </location>
</feature>
<feature type="compositionally biased region" description="Basic and acidic residues" evidence="4">
    <location>
        <begin position="139"/>
        <end position="173"/>
    </location>
</feature>
<feature type="compositionally biased region" description="Acidic residues" evidence="4">
    <location>
        <begin position="339"/>
        <end position="369"/>
    </location>
</feature>
<feature type="compositionally biased region" description="Basic and acidic residues" evidence="4">
    <location>
        <begin position="370"/>
        <end position="386"/>
    </location>
</feature>
<feature type="compositionally biased region" description="Basic and acidic residues" evidence="4">
    <location>
        <begin position="736"/>
        <end position="752"/>
    </location>
</feature>
<feature type="binding site" evidence="2">
    <location>
        <begin position="246"/>
        <end position="253"/>
    </location>
    <ligand>
        <name>ATP</name>
        <dbReference type="ChEBI" id="CHEBI:30616"/>
    </ligand>
</feature>
<evidence type="ECO:0000250" key="1"/>
<evidence type="ECO:0000255" key="2">
    <source>
        <dbReference type="PROSITE-ProRule" id="PRU00541"/>
    </source>
</evidence>
<evidence type="ECO:0000255" key="3">
    <source>
        <dbReference type="PROSITE-ProRule" id="PRU00542"/>
    </source>
</evidence>
<evidence type="ECO:0000256" key="4">
    <source>
        <dbReference type="SAM" id="MobiDB-lite"/>
    </source>
</evidence>
<evidence type="ECO:0000305" key="5"/>
<comment type="function">
    <text>ATP-dependent RNA helicase involved in 40S ribosomal subunit biogenesis. Required for the processing and cleavage of 35S pre-rRNA at sites A0, A1, and A2, leading to mature 18S rRNA.</text>
</comment>
<comment type="catalytic activity">
    <reaction>
        <text>ATP + H2O = ADP + phosphate + H(+)</text>
        <dbReference type="Rhea" id="RHEA:13065"/>
        <dbReference type="ChEBI" id="CHEBI:15377"/>
        <dbReference type="ChEBI" id="CHEBI:15378"/>
        <dbReference type="ChEBI" id="CHEBI:30616"/>
        <dbReference type="ChEBI" id="CHEBI:43474"/>
        <dbReference type="ChEBI" id="CHEBI:456216"/>
        <dbReference type="EC" id="3.6.4.13"/>
    </reaction>
</comment>
<comment type="subunit">
    <text evidence="1">Interacts with the U3 snoRNA and is associated with the 90S and 40S pre-ribosomes.</text>
</comment>
<comment type="subcellular location">
    <subcellularLocation>
        <location evidence="1">Nucleus</location>
        <location evidence="1">Nucleolus</location>
    </subcellularLocation>
</comment>
<comment type="domain">
    <text>The Q motif is unique to and characteristic of the DEAD box family of RNA helicases and controls ATP binding and hydrolysis.</text>
</comment>
<comment type="similarity">
    <text evidence="5">Belongs to the DEAD box helicase family. DDX52/ROK1 subfamily.</text>
</comment>
<protein>
    <recommendedName>
        <fullName>ATP-dependent RNA helicase rok1</fullName>
        <ecNumber>3.6.4.13</ecNumber>
    </recommendedName>
    <alternativeName>
        <fullName>DEAD box RNA helicase 16</fullName>
    </alternativeName>
</protein>
<organism>
    <name type="scientific">Neurospora crassa (strain ATCC 24698 / 74-OR23-1A / CBS 708.71 / DSM 1257 / FGSC 987)</name>
    <dbReference type="NCBI Taxonomy" id="367110"/>
    <lineage>
        <taxon>Eukaryota</taxon>
        <taxon>Fungi</taxon>
        <taxon>Dikarya</taxon>
        <taxon>Ascomycota</taxon>
        <taxon>Pezizomycotina</taxon>
        <taxon>Sordariomycetes</taxon>
        <taxon>Sordariomycetidae</taxon>
        <taxon>Sordariales</taxon>
        <taxon>Sordariaceae</taxon>
        <taxon>Neurospora</taxon>
    </lineage>
</organism>
<gene>
    <name type="primary">drh-16</name>
    <name type="synonym">rok1</name>
    <name type="ORF">G17B7.140</name>
    <name type="ORF">NCU00919</name>
</gene>